<organismHost>
    <name type="scientific">Acanthamoeba polyphaga</name>
    <name type="common">Amoeba</name>
    <dbReference type="NCBI Taxonomy" id="5757"/>
</organismHost>
<protein>
    <recommendedName>
        <fullName>Uncharacterized protein R428</fullName>
    </recommendedName>
</protein>
<accession>Q5UQM7</accession>
<reference key="1">
    <citation type="journal article" date="2004" name="Science">
        <title>The 1.2-megabase genome sequence of Mimivirus.</title>
        <authorList>
            <person name="Raoult D."/>
            <person name="Audic S."/>
            <person name="Robert C."/>
            <person name="Abergel C."/>
            <person name="Renesto P."/>
            <person name="Ogata H."/>
            <person name="La Scola B."/>
            <person name="Susan M."/>
            <person name="Claverie J.-M."/>
        </authorList>
    </citation>
    <scope>NUCLEOTIDE SEQUENCE [LARGE SCALE GENOMIC DNA]</scope>
    <source>
        <strain>Rowbotham-Bradford</strain>
    </source>
</reference>
<organism>
    <name type="scientific">Acanthamoeba polyphaga mimivirus</name>
    <name type="common">APMV</name>
    <dbReference type="NCBI Taxonomy" id="212035"/>
    <lineage>
        <taxon>Viruses</taxon>
        <taxon>Varidnaviria</taxon>
        <taxon>Bamfordvirae</taxon>
        <taxon>Nucleocytoviricota</taxon>
        <taxon>Megaviricetes</taxon>
        <taxon>Imitervirales</taxon>
        <taxon>Mimiviridae</taxon>
        <taxon>Megamimivirinae</taxon>
        <taxon>Mimivirus</taxon>
        <taxon>Mimivirus bradfordmassiliense</taxon>
    </lineage>
</organism>
<keyword id="KW-1185">Reference proteome</keyword>
<sequence>MSLNTEQASIEFNKMLQNGNTTISVQSMNLIKKIIESDQITNKFNHGVRETIKILNPFHGNKVDIDVDVAQLVKYMWISGIRTTNICSCNESIPRDYVWIEFLDTESMKKFISIVFTGIPNTSDIFSRANKLTGINEGSWIYDLTLMDDNPTTRGFDIKDVYTFISVRFPKSDYKWICKRFEKNIKDNNTCTLF</sequence>
<dbReference type="EMBL" id="AY653733">
    <property type="protein sequence ID" value="AAV50697.1"/>
    <property type="molecule type" value="Genomic_DNA"/>
</dbReference>
<dbReference type="KEGG" id="vg:9925049"/>
<dbReference type="Proteomes" id="UP000001134">
    <property type="component" value="Genome"/>
</dbReference>
<gene>
    <name type="ordered locus">MIMI_R428</name>
</gene>
<proteinExistence type="predicted"/>
<name>YR428_MIMIV</name>
<feature type="chain" id="PRO_0000253916" description="Uncharacterized protein R428">
    <location>
        <begin position="1"/>
        <end position="194"/>
    </location>
</feature>